<reference key="1">
    <citation type="submission" date="2006-12" db="EMBL/GenBank/DDBJ databases">
        <title>Complete sequence of chromosome of Mycobacterium sp. KMS.</title>
        <authorList>
            <consortium name="US DOE Joint Genome Institute"/>
            <person name="Copeland A."/>
            <person name="Lucas S."/>
            <person name="Lapidus A."/>
            <person name="Barry K."/>
            <person name="Detter J.C."/>
            <person name="Glavina del Rio T."/>
            <person name="Hammon N."/>
            <person name="Israni S."/>
            <person name="Dalin E."/>
            <person name="Tice H."/>
            <person name="Pitluck S."/>
            <person name="Kiss H."/>
            <person name="Brettin T."/>
            <person name="Bruce D."/>
            <person name="Han C."/>
            <person name="Tapia R."/>
            <person name="Gilna P."/>
            <person name="Schmutz J."/>
            <person name="Larimer F."/>
            <person name="Land M."/>
            <person name="Hauser L."/>
            <person name="Kyrpides N."/>
            <person name="Mikhailova N."/>
            <person name="Miller C.D."/>
            <person name="Richardson P."/>
        </authorList>
    </citation>
    <scope>NUCLEOTIDE SEQUENCE [LARGE SCALE GENOMIC DNA]</scope>
    <source>
        <strain>KMS</strain>
    </source>
</reference>
<sequence length="356" mass="37863">MTGYHALRRVLFLISPERIHTWVFALLRAVTTPDLLRRALQGRLAPRDPVLASTVFGVRFPGPLGLAAGFDKDGRGLHTWPALGFGYAEVGTVTAHPQPGNPEPRLFRLPEDRALLNRMGFNNDGAARLAQRLTRHTSDAPVGVNIGKTKATPADRAVEDYAQSARQLGPLATFLVVNVSSPNTPGLRDLQAVESLRPILTAVRAQTSTPVLVKIAPDLSDADVDEIADLAVELGLAGIVATNTTISRAGLKTPGVEELGPGGVSGAPVAARSLEVLRRLYRRAGDRLVLISVGGIETADDAWERITSGASLLQGYTGFVYGGGLWAKHIHDGLATRLRAEGFTSLSDAVGSAMRQ</sequence>
<accession>A1UHW0</accession>
<evidence type="ECO:0000255" key="1">
    <source>
        <dbReference type="HAMAP-Rule" id="MF_00225"/>
    </source>
</evidence>
<keyword id="KW-1003">Cell membrane</keyword>
<keyword id="KW-0285">Flavoprotein</keyword>
<keyword id="KW-0288">FMN</keyword>
<keyword id="KW-0472">Membrane</keyword>
<keyword id="KW-0560">Oxidoreductase</keyword>
<keyword id="KW-0665">Pyrimidine biosynthesis</keyword>
<name>PYRD_MYCSK</name>
<dbReference type="EC" id="1.3.5.2" evidence="1"/>
<dbReference type="EMBL" id="CP000518">
    <property type="protein sequence ID" value="ABL92418.1"/>
    <property type="molecule type" value="Genomic_DNA"/>
</dbReference>
<dbReference type="SMR" id="A1UHW0"/>
<dbReference type="STRING" id="189918.Mkms_3224"/>
<dbReference type="KEGG" id="mkm:Mkms_3224"/>
<dbReference type="HOGENOM" id="CLU_013640_2_0_11"/>
<dbReference type="OrthoDB" id="9802377at2"/>
<dbReference type="UniPathway" id="UPA00070">
    <property type="reaction ID" value="UER00946"/>
</dbReference>
<dbReference type="GO" id="GO:0005737">
    <property type="term" value="C:cytoplasm"/>
    <property type="evidence" value="ECO:0007669"/>
    <property type="project" value="InterPro"/>
</dbReference>
<dbReference type="GO" id="GO:0005886">
    <property type="term" value="C:plasma membrane"/>
    <property type="evidence" value="ECO:0007669"/>
    <property type="project" value="UniProtKB-SubCell"/>
</dbReference>
<dbReference type="GO" id="GO:0106430">
    <property type="term" value="F:dihydroorotate dehydrogenase (quinone) activity"/>
    <property type="evidence" value="ECO:0007669"/>
    <property type="project" value="UniProtKB-EC"/>
</dbReference>
<dbReference type="GO" id="GO:0006207">
    <property type="term" value="P:'de novo' pyrimidine nucleobase biosynthetic process"/>
    <property type="evidence" value="ECO:0007669"/>
    <property type="project" value="InterPro"/>
</dbReference>
<dbReference type="GO" id="GO:0044205">
    <property type="term" value="P:'de novo' UMP biosynthetic process"/>
    <property type="evidence" value="ECO:0007669"/>
    <property type="project" value="UniProtKB-UniRule"/>
</dbReference>
<dbReference type="CDD" id="cd04738">
    <property type="entry name" value="DHOD_2_like"/>
    <property type="match status" value="1"/>
</dbReference>
<dbReference type="FunFam" id="3.20.20.70:FF:000123">
    <property type="entry name" value="Dihydroorotate dehydrogenase (quinone)"/>
    <property type="match status" value="1"/>
</dbReference>
<dbReference type="Gene3D" id="3.20.20.70">
    <property type="entry name" value="Aldolase class I"/>
    <property type="match status" value="1"/>
</dbReference>
<dbReference type="HAMAP" id="MF_00225">
    <property type="entry name" value="DHO_dh_type2"/>
    <property type="match status" value="1"/>
</dbReference>
<dbReference type="InterPro" id="IPR013785">
    <property type="entry name" value="Aldolase_TIM"/>
</dbReference>
<dbReference type="InterPro" id="IPR050074">
    <property type="entry name" value="DHO_dehydrogenase"/>
</dbReference>
<dbReference type="InterPro" id="IPR005719">
    <property type="entry name" value="Dihydroorotate_DH_2"/>
</dbReference>
<dbReference type="InterPro" id="IPR005720">
    <property type="entry name" value="Dihydroorotate_DH_cat"/>
</dbReference>
<dbReference type="InterPro" id="IPR001295">
    <property type="entry name" value="Dihydroorotate_DH_CS"/>
</dbReference>
<dbReference type="NCBIfam" id="NF003645">
    <property type="entry name" value="PRK05286.1-2"/>
    <property type="match status" value="1"/>
</dbReference>
<dbReference type="NCBIfam" id="NF003648">
    <property type="entry name" value="PRK05286.2-1"/>
    <property type="match status" value="1"/>
</dbReference>
<dbReference type="NCBIfam" id="NF003652">
    <property type="entry name" value="PRK05286.2-5"/>
    <property type="match status" value="1"/>
</dbReference>
<dbReference type="NCBIfam" id="TIGR01036">
    <property type="entry name" value="pyrD_sub2"/>
    <property type="match status" value="1"/>
</dbReference>
<dbReference type="PANTHER" id="PTHR48109:SF4">
    <property type="entry name" value="DIHYDROOROTATE DEHYDROGENASE (QUINONE), MITOCHONDRIAL"/>
    <property type="match status" value="1"/>
</dbReference>
<dbReference type="PANTHER" id="PTHR48109">
    <property type="entry name" value="DIHYDROOROTATE DEHYDROGENASE (QUINONE), MITOCHONDRIAL-RELATED"/>
    <property type="match status" value="1"/>
</dbReference>
<dbReference type="Pfam" id="PF01180">
    <property type="entry name" value="DHO_dh"/>
    <property type="match status" value="1"/>
</dbReference>
<dbReference type="SUPFAM" id="SSF51395">
    <property type="entry name" value="FMN-linked oxidoreductases"/>
    <property type="match status" value="1"/>
</dbReference>
<dbReference type="PROSITE" id="PS00911">
    <property type="entry name" value="DHODEHASE_1"/>
    <property type="match status" value="1"/>
</dbReference>
<dbReference type="PROSITE" id="PS00912">
    <property type="entry name" value="DHODEHASE_2"/>
    <property type="match status" value="1"/>
</dbReference>
<comment type="function">
    <text evidence="1">Catalyzes the conversion of dihydroorotate to orotate with quinone as electron acceptor.</text>
</comment>
<comment type="catalytic activity">
    <reaction evidence="1">
        <text>(S)-dihydroorotate + a quinone = orotate + a quinol</text>
        <dbReference type="Rhea" id="RHEA:30187"/>
        <dbReference type="ChEBI" id="CHEBI:24646"/>
        <dbReference type="ChEBI" id="CHEBI:30839"/>
        <dbReference type="ChEBI" id="CHEBI:30864"/>
        <dbReference type="ChEBI" id="CHEBI:132124"/>
        <dbReference type="EC" id="1.3.5.2"/>
    </reaction>
</comment>
<comment type="cofactor">
    <cofactor evidence="1">
        <name>FMN</name>
        <dbReference type="ChEBI" id="CHEBI:58210"/>
    </cofactor>
    <text evidence="1">Binds 1 FMN per subunit.</text>
</comment>
<comment type="pathway">
    <text evidence="1">Pyrimidine metabolism; UMP biosynthesis via de novo pathway; orotate from (S)-dihydroorotate (quinone route): step 1/1.</text>
</comment>
<comment type="subunit">
    <text evidence="1">Monomer.</text>
</comment>
<comment type="subcellular location">
    <subcellularLocation>
        <location evidence="1">Cell membrane</location>
        <topology evidence="1">Peripheral membrane protein</topology>
    </subcellularLocation>
</comment>
<comment type="similarity">
    <text evidence="1">Belongs to the dihydroorotate dehydrogenase family. Type 2 subfamily.</text>
</comment>
<gene>
    <name evidence="1" type="primary">pyrD</name>
    <name type="ordered locus">Mkms_3224</name>
</gene>
<protein>
    <recommendedName>
        <fullName evidence="1">Dihydroorotate dehydrogenase (quinone)</fullName>
        <ecNumber evidence="1">1.3.5.2</ecNumber>
    </recommendedName>
    <alternativeName>
        <fullName evidence="1">DHOdehase</fullName>
        <shortName evidence="1">DHOD</shortName>
        <shortName evidence="1">DHODase</shortName>
    </alternativeName>
    <alternativeName>
        <fullName evidence="1">Dihydroorotate oxidase</fullName>
    </alternativeName>
</protein>
<proteinExistence type="inferred from homology"/>
<feature type="chain" id="PRO_0000336477" description="Dihydroorotate dehydrogenase (quinone)">
    <location>
        <begin position="1"/>
        <end position="356"/>
    </location>
</feature>
<feature type="active site" description="Nucleophile" evidence="1">
    <location>
        <position position="181"/>
    </location>
</feature>
<feature type="binding site" evidence="1">
    <location>
        <begin position="68"/>
        <end position="72"/>
    </location>
    <ligand>
        <name>FMN</name>
        <dbReference type="ChEBI" id="CHEBI:58210"/>
    </ligand>
</feature>
<feature type="binding site" evidence="1">
    <location>
        <position position="72"/>
    </location>
    <ligand>
        <name>substrate</name>
    </ligand>
</feature>
<feature type="binding site" evidence="1">
    <location>
        <position position="92"/>
    </location>
    <ligand>
        <name>FMN</name>
        <dbReference type="ChEBI" id="CHEBI:58210"/>
    </ligand>
</feature>
<feature type="binding site" evidence="1">
    <location>
        <begin position="117"/>
        <end position="121"/>
    </location>
    <ligand>
        <name>substrate</name>
    </ligand>
</feature>
<feature type="binding site" evidence="1">
    <location>
        <position position="145"/>
    </location>
    <ligand>
        <name>FMN</name>
        <dbReference type="ChEBI" id="CHEBI:58210"/>
    </ligand>
</feature>
<feature type="binding site" evidence="1">
    <location>
        <position position="178"/>
    </location>
    <ligand>
        <name>FMN</name>
        <dbReference type="ChEBI" id="CHEBI:58210"/>
    </ligand>
</feature>
<feature type="binding site" evidence="1">
    <location>
        <position position="178"/>
    </location>
    <ligand>
        <name>substrate</name>
    </ligand>
</feature>
<feature type="binding site" evidence="1">
    <location>
        <position position="183"/>
    </location>
    <ligand>
        <name>substrate</name>
    </ligand>
</feature>
<feature type="binding site" evidence="1">
    <location>
        <position position="214"/>
    </location>
    <ligand>
        <name>FMN</name>
        <dbReference type="ChEBI" id="CHEBI:58210"/>
    </ligand>
</feature>
<feature type="binding site" evidence="1">
    <location>
        <position position="242"/>
    </location>
    <ligand>
        <name>FMN</name>
        <dbReference type="ChEBI" id="CHEBI:58210"/>
    </ligand>
</feature>
<feature type="binding site" evidence="1">
    <location>
        <begin position="243"/>
        <end position="244"/>
    </location>
    <ligand>
        <name>substrate</name>
    </ligand>
</feature>
<feature type="binding site" evidence="1">
    <location>
        <position position="266"/>
    </location>
    <ligand>
        <name>FMN</name>
        <dbReference type="ChEBI" id="CHEBI:58210"/>
    </ligand>
</feature>
<feature type="binding site" evidence="1">
    <location>
        <position position="295"/>
    </location>
    <ligand>
        <name>FMN</name>
        <dbReference type="ChEBI" id="CHEBI:58210"/>
    </ligand>
</feature>
<feature type="binding site" evidence="1">
    <location>
        <begin position="316"/>
        <end position="317"/>
    </location>
    <ligand>
        <name>FMN</name>
        <dbReference type="ChEBI" id="CHEBI:58210"/>
    </ligand>
</feature>
<organism>
    <name type="scientific">Mycobacterium sp. (strain KMS)</name>
    <dbReference type="NCBI Taxonomy" id="189918"/>
    <lineage>
        <taxon>Bacteria</taxon>
        <taxon>Bacillati</taxon>
        <taxon>Actinomycetota</taxon>
        <taxon>Actinomycetes</taxon>
        <taxon>Mycobacteriales</taxon>
        <taxon>Mycobacteriaceae</taxon>
        <taxon>Mycobacterium</taxon>
    </lineage>
</organism>